<evidence type="ECO:0000255" key="1">
    <source>
        <dbReference type="HAMAP-Rule" id="MF_00056"/>
    </source>
</evidence>
<keyword id="KW-0963">Cytoplasm</keyword>
<keyword id="KW-0448">Lipopolysaccharide biosynthesis</keyword>
<keyword id="KW-0808">Transferase</keyword>
<reference key="1">
    <citation type="submission" date="2008-02" db="EMBL/GenBank/DDBJ databases">
        <title>Complete sequence of Yersinia pseudotuberculosis YPIII.</title>
        <authorList>
            <consortium name="US DOE Joint Genome Institute"/>
            <person name="Copeland A."/>
            <person name="Lucas S."/>
            <person name="Lapidus A."/>
            <person name="Glavina del Rio T."/>
            <person name="Dalin E."/>
            <person name="Tice H."/>
            <person name="Bruce D."/>
            <person name="Goodwin L."/>
            <person name="Pitluck S."/>
            <person name="Munk A.C."/>
            <person name="Brettin T."/>
            <person name="Detter J.C."/>
            <person name="Han C."/>
            <person name="Tapia R."/>
            <person name="Schmutz J."/>
            <person name="Larimer F."/>
            <person name="Land M."/>
            <person name="Hauser L."/>
            <person name="Challacombe J.F."/>
            <person name="Green L."/>
            <person name="Lindler L.E."/>
            <person name="Nikolich M.P."/>
            <person name="Richardson P."/>
        </authorList>
    </citation>
    <scope>NUCLEOTIDE SEQUENCE [LARGE SCALE GENOMIC DNA]</scope>
    <source>
        <strain>YPIII</strain>
    </source>
</reference>
<sequence length="284" mass="30740">MKQKVVSIGDINVANDLPFVLFGGMNVLESRDLAMRICEHYVTVTQKLGIPYVFKASFDKANRSSIHSYRGPGLEEGMKIFQELKQQFGVKVITDVHEASQAQPVSEVVDVIQLPAFLARQTDLVEAMARTGAVINVKKPQFVSPGQMGNIVEKFKEAGNDQVILCDRGSNFGYDNLVVDMLGINVMVQATGGHPVIFDVTHALQCRDPFGAASGGRRAQVAELARAGMAVGLAGLFIEAHPEPNSAKCDGPSALPLDKLEPFLVQMKAIDDLVKSFPALDTSK</sequence>
<comment type="catalytic activity">
    <reaction evidence="1">
        <text>D-arabinose 5-phosphate + phosphoenolpyruvate + H2O = 3-deoxy-alpha-D-manno-2-octulosonate-8-phosphate + phosphate</text>
        <dbReference type="Rhea" id="RHEA:14053"/>
        <dbReference type="ChEBI" id="CHEBI:15377"/>
        <dbReference type="ChEBI" id="CHEBI:43474"/>
        <dbReference type="ChEBI" id="CHEBI:57693"/>
        <dbReference type="ChEBI" id="CHEBI:58702"/>
        <dbReference type="ChEBI" id="CHEBI:85985"/>
        <dbReference type="EC" id="2.5.1.55"/>
    </reaction>
</comment>
<comment type="pathway">
    <text evidence="1">Carbohydrate biosynthesis; 3-deoxy-D-manno-octulosonate biosynthesis; 3-deoxy-D-manno-octulosonate from D-ribulose 5-phosphate: step 2/3.</text>
</comment>
<comment type="pathway">
    <text evidence="1">Bacterial outer membrane biogenesis; lipopolysaccharide biosynthesis.</text>
</comment>
<comment type="subcellular location">
    <subcellularLocation>
        <location evidence="1">Cytoplasm</location>
    </subcellularLocation>
</comment>
<comment type="similarity">
    <text evidence="1">Belongs to the KdsA family.</text>
</comment>
<accession>B1JM81</accession>
<gene>
    <name evidence="1" type="primary">kdsA</name>
    <name type="ordered locus">YPK_2175</name>
</gene>
<feature type="chain" id="PRO_1000091848" description="2-dehydro-3-deoxyphosphooctonate aldolase">
    <location>
        <begin position="1"/>
        <end position="284"/>
    </location>
</feature>
<name>KDSA_YERPY</name>
<proteinExistence type="inferred from homology"/>
<dbReference type="EC" id="2.5.1.55" evidence="1"/>
<dbReference type="EMBL" id="CP000950">
    <property type="protein sequence ID" value="ACA68458.1"/>
    <property type="molecule type" value="Genomic_DNA"/>
</dbReference>
<dbReference type="RefSeq" id="WP_002211232.1">
    <property type="nucleotide sequence ID" value="NZ_CP009792.1"/>
</dbReference>
<dbReference type="SMR" id="B1JM81"/>
<dbReference type="GeneID" id="96665504"/>
<dbReference type="KEGG" id="ypy:YPK_2175"/>
<dbReference type="PATRIC" id="fig|502800.11.peg.2848"/>
<dbReference type="UniPathway" id="UPA00030"/>
<dbReference type="UniPathway" id="UPA00357">
    <property type="reaction ID" value="UER00474"/>
</dbReference>
<dbReference type="GO" id="GO:0005737">
    <property type="term" value="C:cytoplasm"/>
    <property type="evidence" value="ECO:0007669"/>
    <property type="project" value="UniProtKB-SubCell"/>
</dbReference>
<dbReference type="GO" id="GO:0008676">
    <property type="term" value="F:3-deoxy-8-phosphooctulonate synthase activity"/>
    <property type="evidence" value="ECO:0007669"/>
    <property type="project" value="UniProtKB-UniRule"/>
</dbReference>
<dbReference type="GO" id="GO:0019294">
    <property type="term" value="P:keto-3-deoxy-D-manno-octulosonic acid biosynthetic process"/>
    <property type="evidence" value="ECO:0007669"/>
    <property type="project" value="UniProtKB-UniRule"/>
</dbReference>
<dbReference type="FunFam" id="3.20.20.70:FF:000058">
    <property type="entry name" value="2-dehydro-3-deoxyphosphooctonate aldolase"/>
    <property type="match status" value="1"/>
</dbReference>
<dbReference type="Gene3D" id="3.20.20.70">
    <property type="entry name" value="Aldolase class I"/>
    <property type="match status" value="1"/>
</dbReference>
<dbReference type="HAMAP" id="MF_00056">
    <property type="entry name" value="KDO8P_synth"/>
    <property type="match status" value="1"/>
</dbReference>
<dbReference type="InterPro" id="IPR013785">
    <property type="entry name" value="Aldolase_TIM"/>
</dbReference>
<dbReference type="InterPro" id="IPR006218">
    <property type="entry name" value="DAHP1/KDSA"/>
</dbReference>
<dbReference type="InterPro" id="IPR006269">
    <property type="entry name" value="KDO8P_synthase"/>
</dbReference>
<dbReference type="NCBIfam" id="TIGR01362">
    <property type="entry name" value="KDO8P_synth"/>
    <property type="match status" value="1"/>
</dbReference>
<dbReference type="NCBIfam" id="NF003543">
    <property type="entry name" value="PRK05198.1"/>
    <property type="match status" value="1"/>
</dbReference>
<dbReference type="NCBIfam" id="NF009109">
    <property type="entry name" value="PRK12457.1"/>
    <property type="match status" value="1"/>
</dbReference>
<dbReference type="PANTHER" id="PTHR21057">
    <property type="entry name" value="PHOSPHO-2-DEHYDRO-3-DEOXYHEPTONATE ALDOLASE"/>
    <property type="match status" value="1"/>
</dbReference>
<dbReference type="Pfam" id="PF00793">
    <property type="entry name" value="DAHP_synth_1"/>
    <property type="match status" value="1"/>
</dbReference>
<dbReference type="SUPFAM" id="SSF51569">
    <property type="entry name" value="Aldolase"/>
    <property type="match status" value="1"/>
</dbReference>
<protein>
    <recommendedName>
        <fullName evidence="1">2-dehydro-3-deoxyphosphooctonate aldolase</fullName>
        <ecNumber evidence="1">2.5.1.55</ecNumber>
    </recommendedName>
    <alternativeName>
        <fullName evidence="1">3-deoxy-D-manno-octulosonic acid 8-phosphate synthase</fullName>
    </alternativeName>
    <alternativeName>
        <fullName evidence="1">KDO-8-phosphate synthase</fullName>
        <shortName evidence="1">KDO 8-P synthase</shortName>
        <shortName evidence="1">KDOPS</shortName>
    </alternativeName>
    <alternativeName>
        <fullName evidence="1">Phospho-2-dehydro-3-deoxyoctonate aldolase</fullName>
    </alternativeName>
</protein>
<organism>
    <name type="scientific">Yersinia pseudotuberculosis serotype O:3 (strain YPIII)</name>
    <dbReference type="NCBI Taxonomy" id="502800"/>
    <lineage>
        <taxon>Bacteria</taxon>
        <taxon>Pseudomonadati</taxon>
        <taxon>Pseudomonadota</taxon>
        <taxon>Gammaproteobacteria</taxon>
        <taxon>Enterobacterales</taxon>
        <taxon>Yersiniaceae</taxon>
        <taxon>Yersinia</taxon>
    </lineage>
</organism>